<dbReference type="EC" id="2.1.1.-"/>
<dbReference type="EMBL" id="CH940648">
    <property type="protein sequence ID" value="EDW60225.1"/>
    <property type="molecule type" value="Genomic_DNA"/>
</dbReference>
<dbReference type="RefSeq" id="XP_002049032.2">
    <property type="nucleotide sequence ID" value="XM_002048996.2"/>
</dbReference>
<dbReference type="RefSeq" id="XP_015029517.1">
    <property type="nucleotide sequence ID" value="XM_015174031.1"/>
</dbReference>
<dbReference type="RefSeq" id="XP_070066401.1">
    <property type="nucleotide sequence ID" value="XM_070210300.1"/>
</dbReference>
<dbReference type="SMR" id="B4LPB6"/>
<dbReference type="FunCoup" id="B4LPB6">
    <property type="interactions" value="2068"/>
</dbReference>
<dbReference type="STRING" id="7244.B4LPB6"/>
<dbReference type="EnsemblMetazoa" id="FBtr0442993">
    <property type="protein sequence ID" value="FBpp0399429"/>
    <property type="gene ID" value="FBgn0208121"/>
</dbReference>
<dbReference type="EnsemblMetazoa" id="XM_015174031.2">
    <property type="protein sequence ID" value="XP_015029517.1"/>
    <property type="gene ID" value="LOC6626596"/>
</dbReference>
<dbReference type="GeneID" id="6626596"/>
<dbReference type="KEGG" id="dvi:6626596"/>
<dbReference type="CTD" id="37664"/>
<dbReference type="eggNOG" id="KOG1501">
    <property type="taxonomic scope" value="Eukaryota"/>
</dbReference>
<dbReference type="HOGENOM" id="CLU_015180_0_0_1"/>
<dbReference type="InParanoid" id="B4LPB6"/>
<dbReference type="OMA" id="CHHDEYS"/>
<dbReference type="OrthoDB" id="412876at2759"/>
<dbReference type="PhylomeDB" id="B4LPB6"/>
<dbReference type="Proteomes" id="UP000008792">
    <property type="component" value="Unassembled WGS sequence"/>
</dbReference>
<dbReference type="GO" id="GO:0042054">
    <property type="term" value="F:histone methyltransferase activity"/>
    <property type="evidence" value="ECO:0007669"/>
    <property type="project" value="TreeGrafter"/>
</dbReference>
<dbReference type="GO" id="GO:0035243">
    <property type="term" value="F:protein-arginine omega-N symmetric methyltransferase activity"/>
    <property type="evidence" value="ECO:0000250"/>
    <property type="project" value="UniProtKB"/>
</dbReference>
<dbReference type="GO" id="GO:0018216">
    <property type="term" value="P:peptidyl-arginine methylation"/>
    <property type="evidence" value="ECO:0000250"/>
    <property type="project" value="UniProtKB"/>
</dbReference>
<dbReference type="CDD" id="cd02440">
    <property type="entry name" value="AdoMet_MTases"/>
    <property type="match status" value="1"/>
</dbReference>
<dbReference type="FunFam" id="2.70.160.11:FF:000014">
    <property type="entry name" value="Protein arginine N-methyltransferase 7"/>
    <property type="match status" value="1"/>
</dbReference>
<dbReference type="FunFam" id="2.70.160.11:FF:000019">
    <property type="entry name" value="Protein arginine N-methyltransferase 7"/>
    <property type="match status" value="1"/>
</dbReference>
<dbReference type="FunFam" id="3.40.50.150:FF:000070">
    <property type="entry name" value="Protein arginine N-methyltransferase 7"/>
    <property type="match status" value="1"/>
</dbReference>
<dbReference type="FunFam" id="3.40.50.150:FF:000071">
    <property type="entry name" value="Protein arginine N-methyltransferase 7"/>
    <property type="match status" value="1"/>
</dbReference>
<dbReference type="Gene3D" id="2.70.160.11">
    <property type="entry name" value="Hnrnp arginine n-methyltransferase1"/>
    <property type="match status" value="2"/>
</dbReference>
<dbReference type="Gene3D" id="3.40.50.150">
    <property type="entry name" value="Vaccinia Virus protein VP39"/>
    <property type="match status" value="2"/>
</dbReference>
<dbReference type="InterPro" id="IPR025799">
    <property type="entry name" value="Arg_MeTrfase"/>
</dbReference>
<dbReference type="InterPro" id="IPR014644">
    <property type="entry name" value="MeTrfase_PRMT7"/>
</dbReference>
<dbReference type="InterPro" id="IPR055135">
    <property type="entry name" value="PRMT_dom"/>
</dbReference>
<dbReference type="InterPro" id="IPR029063">
    <property type="entry name" value="SAM-dependent_MTases_sf"/>
</dbReference>
<dbReference type="PANTHER" id="PTHR11006">
    <property type="entry name" value="PROTEIN ARGININE N-METHYLTRANSFERASE"/>
    <property type="match status" value="1"/>
</dbReference>
<dbReference type="PANTHER" id="PTHR11006:SF4">
    <property type="entry name" value="PROTEIN ARGININE N-METHYLTRANSFERASE 7"/>
    <property type="match status" value="1"/>
</dbReference>
<dbReference type="Pfam" id="PF22528">
    <property type="entry name" value="PRMT_C"/>
    <property type="match status" value="1"/>
</dbReference>
<dbReference type="PIRSF" id="PIRSF036946">
    <property type="entry name" value="Arg_N-mtase"/>
    <property type="match status" value="1"/>
</dbReference>
<dbReference type="SUPFAM" id="SSF53335">
    <property type="entry name" value="S-adenosyl-L-methionine-dependent methyltransferases"/>
    <property type="match status" value="2"/>
</dbReference>
<dbReference type="PROSITE" id="PS51678">
    <property type="entry name" value="SAM_MT_PRMT"/>
    <property type="match status" value="2"/>
</dbReference>
<comment type="function">
    <text evidence="1">Essential arginine methyltransferase that can both catalyze the formation of omega-N monomethylarginine (MMA) and symmetrical dimethylarginine (sDMA). Specifically mediates the symmetrical dimethylation of arginine residues in the small nuclear ribonucleoproteins SmD1 and SmD3 (By similarity).</text>
</comment>
<comment type="similarity">
    <text evidence="2">Belongs to the class I-like SAM-binding methyltransferase superfamily. Protein arginine N-methyltransferase family. PRMT7 subfamily.</text>
</comment>
<proteinExistence type="inferred from homology"/>
<protein>
    <recommendedName>
        <fullName>Protein arginine N-methyltransferase 7</fullName>
        <ecNumber>2.1.1.-</ecNumber>
    </recommendedName>
</protein>
<name>ANM7_DROVI</name>
<gene>
    <name type="primary">Art7</name>
    <name type="ORF">GJ20986</name>
</gene>
<accession>B4LPB6</accession>
<keyword id="KW-0489">Methyltransferase</keyword>
<keyword id="KW-1185">Reference proteome</keyword>
<keyword id="KW-0677">Repeat</keyword>
<keyword id="KW-0949">S-adenosyl-L-methionine</keyword>
<keyword id="KW-0808">Transferase</keyword>
<evidence type="ECO:0000250" key="1"/>
<evidence type="ECO:0000255" key="2">
    <source>
        <dbReference type="PROSITE-ProRule" id="PRU01015"/>
    </source>
</evidence>
<organism>
    <name type="scientific">Drosophila virilis</name>
    <name type="common">Fruit fly</name>
    <dbReference type="NCBI Taxonomy" id="7244"/>
    <lineage>
        <taxon>Eukaryota</taxon>
        <taxon>Metazoa</taxon>
        <taxon>Ecdysozoa</taxon>
        <taxon>Arthropoda</taxon>
        <taxon>Hexapoda</taxon>
        <taxon>Insecta</taxon>
        <taxon>Pterygota</taxon>
        <taxon>Neoptera</taxon>
        <taxon>Endopterygota</taxon>
        <taxon>Diptera</taxon>
        <taxon>Brachycera</taxon>
        <taxon>Muscomorpha</taxon>
        <taxon>Ephydroidea</taxon>
        <taxon>Drosophilidae</taxon>
        <taxon>Drosophila</taxon>
    </lineage>
</organism>
<sequence length="697" mass="79055">MASFSQVINPMTGQNTWQERGDDYDYHQEVANAGFGDMLHDWERNQKYYAALRKTIAAMRKAGKEVHALDIGTGTGILAMMALRAGADTVTACEAFMPMANCAARILAANDAAQVRLIRKRSTDIQMGIDMPHRANLLVAELLDTELIGEGAISIYNHAHQELLTDDALCIPARATCYAQVAQSPLATQWNSLKVLPSLDGDILLRPPAQLMECSGEAALHDVQLSQLPPNSFHTLTEPAQIFQFDFQRKQPREQQREHVLRLQLSKPGSVELVFYWWQIELDDAGEQLLSCAPYWAHPELQQLQKSFKDADRPLPNIVPWRDHWMQAIYYIPKPLQLHQAGEQFWLRCYHDEYSLWFDAHKEQPEQPARRHSCSCDLHLTYTRNRIGQLNQGTRNKRYLAYLEQAVQQAKPAHVLVIGDGCLLGLASSALGACSVRCLEPHRFSRRLLESVAKHNKLKNVRFLESLQQLEPEELNTLTHIFAEPYFLNAILPWDNFYFGTLLLQLQQQQKLSESVEISPCAARIYALPVQFLDLHKIRTPIISCEGFDLTLFDEMVQRSAKQALSQVEAQPLWEYPCRALAEPQLLLSVNFANFGVEQHNQGCLELTAKGNCNGVALWVDWQLAANNSSKSIVSTGPLEPIVPGQFVKWDMFVRQGVHFPSQTDDQTHLKWSTTLRPLLGELTFNFSLQASHEETK</sequence>
<reference key="1">
    <citation type="journal article" date="2007" name="Nature">
        <title>Evolution of genes and genomes on the Drosophila phylogeny.</title>
        <authorList>
            <consortium name="Drosophila 12 genomes consortium"/>
        </authorList>
    </citation>
    <scope>NUCLEOTIDE SEQUENCE [LARGE SCALE GENOMIC DNA]</scope>
    <source>
        <strain>Tucson 15010-1051.87</strain>
    </source>
</reference>
<feature type="chain" id="PRO_0000373920" description="Protein arginine N-methyltransferase 7">
    <location>
        <begin position="1"/>
        <end position="697"/>
    </location>
</feature>
<feature type="domain" description="SAM-dependent MTase PRMT-type 1" evidence="2">
    <location>
        <begin position="14"/>
        <end position="357"/>
    </location>
</feature>
<feature type="domain" description="SAM-dependent MTase PRMT-type 2" evidence="2">
    <location>
        <begin position="366"/>
        <end position="697"/>
    </location>
</feature>